<sequence length="64" mass="7275">MARKDQISHRGPLSGNNRSHALNATKRKFNLNLQQITLKTASGKKIRLKVSAKTKKILRKWGHV</sequence>
<feature type="chain" id="PRO_0000178505" description="Large ribosomal subunit protein bL28">
    <location>
        <begin position="1"/>
        <end position="64"/>
    </location>
</feature>
<feature type="region of interest" description="Disordered" evidence="2">
    <location>
        <begin position="1"/>
        <end position="23"/>
    </location>
</feature>
<proteinExistence type="inferred from homology"/>
<dbReference type="EMBL" id="AE017332">
    <property type="protein sequence ID" value="AAV27489.1"/>
    <property type="molecule type" value="Genomic_DNA"/>
</dbReference>
<dbReference type="RefSeq" id="WP_011206096.1">
    <property type="nucleotide sequence ID" value="NC_006360.1"/>
</dbReference>
<dbReference type="SMR" id="Q601E3"/>
<dbReference type="KEGG" id="mhy:mhp259"/>
<dbReference type="eggNOG" id="COG0227">
    <property type="taxonomic scope" value="Bacteria"/>
</dbReference>
<dbReference type="HOGENOM" id="CLU_064548_7_2_14"/>
<dbReference type="PhylomeDB" id="Q601E3"/>
<dbReference type="Proteomes" id="UP000006822">
    <property type="component" value="Chromosome"/>
</dbReference>
<dbReference type="GO" id="GO:1990904">
    <property type="term" value="C:ribonucleoprotein complex"/>
    <property type="evidence" value="ECO:0007669"/>
    <property type="project" value="UniProtKB-KW"/>
</dbReference>
<dbReference type="GO" id="GO:0005840">
    <property type="term" value="C:ribosome"/>
    <property type="evidence" value="ECO:0007669"/>
    <property type="project" value="UniProtKB-KW"/>
</dbReference>
<dbReference type="GO" id="GO:0003735">
    <property type="term" value="F:structural constituent of ribosome"/>
    <property type="evidence" value="ECO:0007669"/>
    <property type="project" value="InterPro"/>
</dbReference>
<dbReference type="GO" id="GO:0006412">
    <property type="term" value="P:translation"/>
    <property type="evidence" value="ECO:0007669"/>
    <property type="project" value="UniProtKB-UniRule"/>
</dbReference>
<dbReference type="Gene3D" id="2.30.170.40">
    <property type="entry name" value="Ribosomal protein L28/L24"/>
    <property type="match status" value="1"/>
</dbReference>
<dbReference type="HAMAP" id="MF_00373">
    <property type="entry name" value="Ribosomal_bL28"/>
    <property type="match status" value="1"/>
</dbReference>
<dbReference type="InterPro" id="IPR050096">
    <property type="entry name" value="Bacterial_rp_bL28"/>
</dbReference>
<dbReference type="InterPro" id="IPR026569">
    <property type="entry name" value="Ribosomal_bL28"/>
</dbReference>
<dbReference type="InterPro" id="IPR034704">
    <property type="entry name" value="Ribosomal_bL28/bL31-like_sf"/>
</dbReference>
<dbReference type="InterPro" id="IPR001383">
    <property type="entry name" value="Ribosomal_bL28_bact-type"/>
</dbReference>
<dbReference type="InterPro" id="IPR037147">
    <property type="entry name" value="Ribosomal_bL28_sf"/>
</dbReference>
<dbReference type="NCBIfam" id="TIGR00009">
    <property type="entry name" value="L28"/>
    <property type="match status" value="1"/>
</dbReference>
<dbReference type="PANTHER" id="PTHR39080">
    <property type="entry name" value="50S RIBOSOMAL PROTEIN L28"/>
    <property type="match status" value="1"/>
</dbReference>
<dbReference type="PANTHER" id="PTHR39080:SF1">
    <property type="entry name" value="LARGE RIBOSOMAL SUBUNIT PROTEIN BL28A"/>
    <property type="match status" value="1"/>
</dbReference>
<dbReference type="Pfam" id="PF00830">
    <property type="entry name" value="Ribosomal_L28"/>
    <property type="match status" value="1"/>
</dbReference>
<dbReference type="SUPFAM" id="SSF143800">
    <property type="entry name" value="L28p-like"/>
    <property type="match status" value="1"/>
</dbReference>
<name>RL28_MESH2</name>
<accession>Q601E3</accession>
<reference key="1">
    <citation type="journal article" date="2004" name="J. Bacteriol.">
        <title>The genome sequence of Mycoplasma hyopneumoniae strain 232, the agent of swine mycoplasmosis.</title>
        <authorList>
            <person name="Minion F.C."/>
            <person name="Lefkowitz E.J."/>
            <person name="Madsen M.L."/>
            <person name="Cleary B.J."/>
            <person name="Swartzell S.M."/>
            <person name="Mahairas G.G."/>
        </authorList>
    </citation>
    <scope>NUCLEOTIDE SEQUENCE [LARGE SCALE GENOMIC DNA]</scope>
    <source>
        <strain>232</strain>
    </source>
</reference>
<keyword id="KW-0687">Ribonucleoprotein</keyword>
<keyword id="KW-0689">Ribosomal protein</keyword>
<organism>
    <name type="scientific">Mesomycoplasma hyopneumoniae (strain 232)</name>
    <name type="common">Mycoplasma hyopneumoniae</name>
    <dbReference type="NCBI Taxonomy" id="295358"/>
    <lineage>
        <taxon>Bacteria</taxon>
        <taxon>Bacillati</taxon>
        <taxon>Mycoplasmatota</taxon>
        <taxon>Mycoplasmoidales</taxon>
        <taxon>Metamycoplasmataceae</taxon>
        <taxon>Mesomycoplasma</taxon>
    </lineage>
</organism>
<protein>
    <recommendedName>
        <fullName evidence="1">Large ribosomal subunit protein bL28</fullName>
    </recommendedName>
    <alternativeName>
        <fullName evidence="3">50S ribosomal protein L28</fullName>
    </alternativeName>
</protein>
<evidence type="ECO:0000255" key="1">
    <source>
        <dbReference type="HAMAP-Rule" id="MF_00373"/>
    </source>
</evidence>
<evidence type="ECO:0000256" key="2">
    <source>
        <dbReference type="SAM" id="MobiDB-lite"/>
    </source>
</evidence>
<evidence type="ECO:0000305" key="3"/>
<comment type="similarity">
    <text evidence="1">Belongs to the bacterial ribosomal protein bL28 family.</text>
</comment>
<gene>
    <name evidence="1" type="primary">rpmB</name>
    <name evidence="1" type="synonym">rpl28</name>
    <name type="ordered locus">mhp259</name>
</gene>